<organism>
    <name type="scientific">Conus betulinus</name>
    <name type="common">Beech cone</name>
    <dbReference type="NCBI Taxonomy" id="89764"/>
    <lineage>
        <taxon>Eukaryota</taxon>
        <taxon>Metazoa</taxon>
        <taxon>Spiralia</taxon>
        <taxon>Lophotrochozoa</taxon>
        <taxon>Mollusca</taxon>
        <taxon>Gastropoda</taxon>
        <taxon>Caenogastropoda</taxon>
        <taxon>Neogastropoda</taxon>
        <taxon>Conoidea</taxon>
        <taxon>Conidae</taxon>
        <taxon>Conus</taxon>
        <taxon>Dendroconus</taxon>
    </lineage>
</organism>
<comment type="subcellular location">
    <subcellularLocation>
        <location evidence="1">Secreted</location>
    </subcellularLocation>
</comment>
<comment type="tissue specificity">
    <text>Expressed by the venom duct.</text>
</comment>
<comment type="domain">
    <text>The cysteine framework is V (CC-CC).</text>
</comment>
<comment type="PTM">
    <text evidence="4">Contains 2 disulfide bonds that can be either 'C1-C3, C2-C4' or 'C1-C4, C2-C3', since these disulfide connectivities have been observed for conotoxins with cysteine framework V (for examples, see AC P0DQQ7 and AC P81755).</text>
</comment>
<comment type="similarity">
    <text evidence="4">Belongs to the conotoxin T superfamily.</text>
</comment>
<feature type="signal peptide" evidence="2">
    <location>
        <begin position="1"/>
        <end position="22"/>
    </location>
</feature>
<feature type="propeptide" id="PRO_0000274055" evidence="1">
    <location>
        <begin position="23"/>
        <end position="48"/>
    </location>
</feature>
<feature type="peptide" id="PRO_0000274056" description="Conotoxin Bt5.1">
    <location>
        <begin position="51"/>
        <end position="61"/>
    </location>
</feature>
<protein>
    <recommendedName>
        <fullName evidence="4">Conotoxin Bt5.1</fullName>
    </recommendedName>
    <alternativeName>
        <fullName evidence="3">Conotoxin BeB34</fullName>
    </alternativeName>
</protein>
<proteinExistence type="evidence at transcript level"/>
<evidence type="ECO:0000250" key="1"/>
<evidence type="ECO:0000255" key="2"/>
<evidence type="ECO:0000303" key="3">
    <source>
    </source>
</evidence>
<evidence type="ECO:0000305" key="4"/>
<reference key="1">
    <citation type="journal article" date="2006" name="Chem. Biol. Drug Des.">
        <title>Identification and molecular diversity of T-superfamily conotoxins from Conus lividus and Conus litteratus.</title>
        <authorList>
            <person name="Luo S."/>
            <person name="Zhangsun D."/>
            <person name="Wu Y."/>
            <person name="Zhu X."/>
            <person name="Xie L."/>
            <person name="Hu Y."/>
            <person name="Zhang J."/>
            <person name="Zhao X."/>
        </authorList>
    </citation>
    <scope>NUCLEOTIDE SEQUENCE [MRNA]</scope>
    <source>
        <tissue>Venom duct</tissue>
    </source>
</reference>
<accession>Q3YEH6</accession>
<dbReference type="EMBL" id="DQ141137">
    <property type="protein sequence ID" value="AAZ85402.1"/>
    <property type="molecule type" value="mRNA"/>
</dbReference>
<dbReference type="ConoServer" id="1674">
    <property type="toxin name" value="BeB34 precursor"/>
</dbReference>
<dbReference type="GO" id="GO:0005576">
    <property type="term" value="C:extracellular region"/>
    <property type="evidence" value="ECO:0007669"/>
    <property type="project" value="UniProtKB-SubCell"/>
</dbReference>
<dbReference type="GO" id="GO:0090729">
    <property type="term" value="F:toxin activity"/>
    <property type="evidence" value="ECO:0007669"/>
    <property type="project" value="UniProtKB-KW"/>
</dbReference>
<dbReference type="InterPro" id="IPR031565">
    <property type="entry name" value="T-conotoxin"/>
</dbReference>
<dbReference type="Pfam" id="PF16981">
    <property type="entry name" value="Chi-conotoxin"/>
    <property type="match status" value="1"/>
</dbReference>
<sequence length="61" mass="6754">MRGLPVFVILLLLIASEPSVDARPKTKADVPLTSLNDNAKRTLQILRNKRACCPYEPSCCI</sequence>
<name>CT34_CONBE</name>
<keyword id="KW-0165">Cleavage on pair of basic residues</keyword>
<keyword id="KW-1015">Disulfide bond</keyword>
<keyword id="KW-0964">Secreted</keyword>
<keyword id="KW-0732">Signal</keyword>
<keyword id="KW-0800">Toxin</keyword>